<name>COAD_ECO24</name>
<dbReference type="EC" id="2.7.7.3" evidence="1"/>
<dbReference type="EMBL" id="CP000800">
    <property type="protein sequence ID" value="ABV20725.1"/>
    <property type="molecule type" value="Genomic_DNA"/>
</dbReference>
<dbReference type="RefSeq" id="WP_001171866.1">
    <property type="nucleotide sequence ID" value="NC_009801.1"/>
</dbReference>
<dbReference type="SMR" id="A7ZTI5"/>
<dbReference type="GeneID" id="75202203"/>
<dbReference type="KEGG" id="ecw:EcE24377A_4135"/>
<dbReference type="HOGENOM" id="CLU_100149_0_1_6"/>
<dbReference type="UniPathway" id="UPA00241">
    <property type="reaction ID" value="UER00355"/>
</dbReference>
<dbReference type="Proteomes" id="UP000001122">
    <property type="component" value="Chromosome"/>
</dbReference>
<dbReference type="GO" id="GO:0005737">
    <property type="term" value="C:cytoplasm"/>
    <property type="evidence" value="ECO:0007669"/>
    <property type="project" value="UniProtKB-SubCell"/>
</dbReference>
<dbReference type="GO" id="GO:0005524">
    <property type="term" value="F:ATP binding"/>
    <property type="evidence" value="ECO:0007669"/>
    <property type="project" value="UniProtKB-KW"/>
</dbReference>
<dbReference type="GO" id="GO:0004595">
    <property type="term" value="F:pantetheine-phosphate adenylyltransferase activity"/>
    <property type="evidence" value="ECO:0007669"/>
    <property type="project" value="UniProtKB-UniRule"/>
</dbReference>
<dbReference type="GO" id="GO:0015937">
    <property type="term" value="P:coenzyme A biosynthetic process"/>
    <property type="evidence" value="ECO:0007669"/>
    <property type="project" value="UniProtKB-UniRule"/>
</dbReference>
<dbReference type="CDD" id="cd02163">
    <property type="entry name" value="PPAT"/>
    <property type="match status" value="1"/>
</dbReference>
<dbReference type="FunFam" id="3.40.50.620:FF:000012">
    <property type="entry name" value="Phosphopantetheine adenylyltransferase"/>
    <property type="match status" value="1"/>
</dbReference>
<dbReference type="Gene3D" id="3.40.50.620">
    <property type="entry name" value="HUPs"/>
    <property type="match status" value="1"/>
</dbReference>
<dbReference type="HAMAP" id="MF_00151">
    <property type="entry name" value="PPAT_bact"/>
    <property type="match status" value="1"/>
</dbReference>
<dbReference type="InterPro" id="IPR004821">
    <property type="entry name" value="Cyt_trans-like"/>
</dbReference>
<dbReference type="InterPro" id="IPR001980">
    <property type="entry name" value="PPAT"/>
</dbReference>
<dbReference type="InterPro" id="IPR014729">
    <property type="entry name" value="Rossmann-like_a/b/a_fold"/>
</dbReference>
<dbReference type="NCBIfam" id="TIGR01510">
    <property type="entry name" value="coaD_prev_kdtB"/>
    <property type="match status" value="1"/>
</dbReference>
<dbReference type="NCBIfam" id="TIGR00125">
    <property type="entry name" value="cyt_tran_rel"/>
    <property type="match status" value="1"/>
</dbReference>
<dbReference type="PANTHER" id="PTHR21342">
    <property type="entry name" value="PHOSPHOPANTETHEINE ADENYLYLTRANSFERASE"/>
    <property type="match status" value="1"/>
</dbReference>
<dbReference type="PANTHER" id="PTHR21342:SF1">
    <property type="entry name" value="PHOSPHOPANTETHEINE ADENYLYLTRANSFERASE"/>
    <property type="match status" value="1"/>
</dbReference>
<dbReference type="Pfam" id="PF01467">
    <property type="entry name" value="CTP_transf_like"/>
    <property type="match status" value="1"/>
</dbReference>
<dbReference type="PRINTS" id="PR01020">
    <property type="entry name" value="LPSBIOSNTHSS"/>
</dbReference>
<dbReference type="SUPFAM" id="SSF52374">
    <property type="entry name" value="Nucleotidylyl transferase"/>
    <property type="match status" value="1"/>
</dbReference>
<evidence type="ECO:0000255" key="1">
    <source>
        <dbReference type="HAMAP-Rule" id="MF_00151"/>
    </source>
</evidence>
<proteinExistence type="inferred from homology"/>
<reference key="1">
    <citation type="journal article" date="2008" name="J. Bacteriol.">
        <title>The pangenome structure of Escherichia coli: comparative genomic analysis of E. coli commensal and pathogenic isolates.</title>
        <authorList>
            <person name="Rasko D.A."/>
            <person name="Rosovitz M.J."/>
            <person name="Myers G.S.A."/>
            <person name="Mongodin E.F."/>
            <person name="Fricke W.F."/>
            <person name="Gajer P."/>
            <person name="Crabtree J."/>
            <person name="Sebaihia M."/>
            <person name="Thomson N.R."/>
            <person name="Chaudhuri R."/>
            <person name="Henderson I.R."/>
            <person name="Sperandio V."/>
            <person name="Ravel J."/>
        </authorList>
    </citation>
    <scope>NUCLEOTIDE SEQUENCE [LARGE SCALE GENOMIC DNA]</scope>
    <source>
        <strain>E24377A / ETEC</strain>
    </source>
</reference>
<comment type="function">
    <text evidence="1">Reversibly transfers an adenylyl group from ATP to 4'-phosphopantetheine, yielding dephospho-CoA (dPCoA) and pyrophosphate.</text>
</comment>
<comment type="catalytic activity">
    <reaction evidence="1">
        <text>(R)-4'-phosphopantetheine + ATP + H(+) = 3'-dephospho-CoA + diphosphate</text>
        <dbReference type="Rhea" id="RHEA:19801"/>
        <dbReference type="ChEBI" id="CHEBI:15378"/>
        <dbReference type="ChEBI" id="CHEBI:30616"/>
        <dbReference type="ChEBI" id="CHEBI:33019"/>
        <dbReference type="ChEBI" id="CHEBI:57328"/>
        <dbReference type="ChEBI" id="CHEBI:61723"/>
        <dbReference type="EC" id="2.7.7.3"/>
    </reaction>
</comment>
<comment type="cofactor">
    <cofactor evidence="1">
        <name>Mg(2+)</name>
        <dbReference type="ChEBI" id="CHEBI:18420"/>
    </cofactor>
</comment>
<comment type="pathway">
    <text evidence="1">Cofactor biosynthesis; coenzyme A biosynthesis; CoA from (R)-pantothenate: step 4/5.</text>
</comment>
<comment type="subunit">
    <text evidence="1">Homohexamer.</text>
</comment>
<comment type="subcellular location">
    <subcellularLocation>
        <location evidence="1">Cytoplasm</location>
    </subcellularLocation>
</comment>
<comment type="similarity">
    <text evidence="1">Belongs to the bacterial CoaD family.</text>
</comment>
<organism>
    <name type="scientific">Escherichia coli O139:H28 (strain E24377A / ETEC)</name>
    <dbReference type="NCBI Taxonomy" id="331111"/>
    <lineage>
        <taxon>Bacteria</taxon>
        <taxon>Pseudomonadati</taxon>
        <taxon>Pseudomonadota</taxon>
        <taxon>Gammaproteobacteria</taxon>
        <taxon>Enterobacterales</taxon>
        <taxon>Enterobacteriaceae</taxon>
        <taxon>Escherichia</taxon>
    </lineage>
</organism>
<accession>A7ZTI5</accession>
<sequence length="159" mass="17837">MQKRAIYPGTFDPITNGHIDIVTRATQMFDHVILAIAASPSKKPMFTLEERVALAQQATAHLGNVEVVGFSDLMANFARNQHATVLIRGLRAVADFEYEMQLAHMNRHLMPELESVFLMPSKEWSFISSSLVKEVARHQGDVTHFLPENVHQALMAKLA</sequence>
<feature type="chain" id="PRO_1000058161" description="Phosphopantetheine adenylyltransferase">
    <location>
        <begin position="1"/>
        <end position="159"/>
    </location>
</feature>
<feature type="binding site" evidence="1">
    <location>
        <begin position="10"/>
        <end position="11"/>
    </location>
    <ligand>
        <name>ATP</name>
        <dbReference type="ChEBI" id="CHEBI:30616"/>
    </ligand>
</feature>
<feature type="binding site" evidence="1">
    <location>
        <position position="10"/>
    </location>
    <ligand>
        <name>substrate</name>
    </ligand>
</feature>
<feature type="binding site" evidence="1">
    <location>
        <position position="18"/>
    </location>
    <ligand>
        <name>ATP</name>
        <dbReference type="ChEBI" id="CHEBI:30616"/>
    </ligand>
</feature>
<feature type="binding site" evidence="1">
    <location>
        <position position="42"/>
    </location>
    <ligand>
        <name>substrate</name>
    </ligand>
</feature>
<feature type="binding site" evidence="1">
    <location>
        <position position="74"/>
    </location>
    <ligand>
        <name>substrate</name>
    </ligand>
</feature>
<feature type="binding site" evidence="1">
    <location>
        <position position="88"/>
    </location>
    <ligand>
        <name>substrate</name>
    </ligand>
</feature>
<feature type="binding site" evidence="1">
    <location>
        <begin position="89"/>
        <end position="91"/>
    </location>
    <ligand>
        <name>ATP</name>
        <dbReference type="ChEBI" id="CHEBI:30616"/>
    </ligand>
</feature>
<feature type="binding site" evidence="1">
    <location>
        <position position="99"/>
    </location>
    <ligand>
        <name>ATP</name>
        <dbReference type="ChEBI" id="CHEBI:30616"/>
    </ligand>
</feature>
<feature type="binding site" evidence="1">
    <location>
        <begin position="124"/>
        <end position="130"/>
    </location>
    <ligand>
        <name>ATP</name>
        <dbReference type="ChEBI" id="CHEBI:30616"/>
    </ligand>
</feature>
<feature type="site" description="Transition state stabilizer" evidence="1">
    <location>
        <position position="18"/>
    </location>
</feature>
<protein>
    <recommendedName>
        <fullName evidence="1">Phosphopantetheine adenylyltransferase</fullName>
        <ecNumber evidence="1">2.7.7.3</ecNumber>
    </recommendedName>
    <alternativeName>
        <fullName evidence="1">Dephospho-CoA pyrophosphorylase</fullName>
    </alternativeName>
    <alternativeName>
        <fullName evidence="1">Pantetheine-phosphate adenylyltransferase</fullName>
        <shortName evidence="1">PPAT</shortName>
    </alternativeName>
</protein>
<gene>
    <name evidence="1" type="primary">coaD</name>
    <name type="ordered locus">EcE24377A_4135</name>
</gene>
<keyword id="KW-0067">ATP-binding</keyword>
<keyword id="KW-0173">Coenzyme A biosynthesis</keyword>
<keyword id="KW-0963">Cytoplasm</keyword>
<keyword id="KW-0460">Magnesium</keyword>
<keyword id="KW-0547">Nucleotide-binding</keyword>
<keyword id="KW-0548">Nucleotidyltransferase</keyword>
<keyword id="KW-1185">Reference proteome</keyword>
<keyword id="KW-0808">Transferase</keyword>